<feature type="chain" id="PRO_0000098824" description="Tryptophan synthase alpha chain">
    <location>
        <begin position="1"/>
        <end position="279"/>
    </location>
</feature>
<feature type="active site" description="Proton acceptor" evidence="1">
    <location>
        <position position="63"/>
    </location>
</feature>
<feature type="active site" description="Proton acceptor" evidence="1">
    <location>
        <position position="74"/>
    </location>
</feature>
<name>TRPA_PROMP</name>
<comment type="function">
    <text evidence="1">The alpha subunit is responsible for the aldol cleavage of indoleglycerol phosphate to indole and glyceraldehyde 3-phosphate.</text>
</comment>
<comment type="catalytic activity">
    <reaction evidence="1">
        <text>(1S,2R)-1-C-(indol-3-yl)glycerol 3-phosphate + L-serine = D-glyceraldehyde 3-phosphate + L-tryptophan + H2O</text>
        <dbReference type="Rhea" id="RHEA:10532"/>
        <dbReference type="ChEBI" id="CHEBI:15377"/>
        <dbReference type="ChEBI" id="CHEBI:33384"/>
        <dbReference type="ChEBI" id="CHEBI:57912"/>
        <dbReference type="ChEBI" id="CHEBI:58866"/>
        <dbReference type="ChEBI" id="CHEBI:59776"/>
        <dbReference type="EC" id="4.2.1.20"/>
    </reaction>
</comment>
<comment type="pathway">
    <text evidence="1">Amino-acid biosynthesis; L-tryptophan biosynthesis; L-tryptophan from chorismate: step 5/5.</text>
</comment>
<comment type="subunit">
    <text evidence="1">Tetramer of two alpha and two beta chains.</text>
</comment>
<comment type="similarity">
    <text evidence="1">Belongs to the TrpA family.</text>
</comment>
<accession>Q7TUC8</accession>
<reference key="1">
    <citation type="journal article" date="2003" name="Nature">
        <title>Genome divergence in two Prochlorococcus ecotypes reflects oceanic niche differentiation.</title>
        <authorList>
            <person name="Rocap G."/>
            <person name="Larimer F.W."/>
            <person name="Lamerdin J.E."/>
            <person name="Malfatti S."/>
            <person name="Chain P."/>
            <person name="Ahlgren N.A."/>
            <person name="Arellano A."/>
            <person name="Coleman M."/>
            <person name="Hauser L."/>
            <person name="Hess W.R."/>
            <person name="Johnson Z.I."/>
            <person name="Land M.L."/>
            <person name="Lindell D."/>
            <person name="Post A.F."/>
            <person name="Regala W."/>
            <person name="Shah M."/>
            <person name="Shaw S.L."/>
            <person name="Steglich C."/>
            <person name="Sullivan M.B."/>
            <person name="Ting C.S."/>
            <person name="Tolonen A."/>
            <person name="Webb E.A."/>
            <person name="Zinser E.R."/>
            <person name="Chisholm S.W."/>
        </authorList>
    </citation>
    <scope>NUCLEOTIDE SEQUENCE [LARGE SCALE GENOMIC DNA]</scope>
    <source>
        <strain>CCMP1986 / NIES-2087 / MED4</strain>
    </source>
</reference>
<organism>
    <name type="scientific">Prochlorococcus marinus subsp. pastoris (strain CCMP1986 / NIES-2087 / MED4)</name>
    <dbReference type="NCBI Taxonomy" id="59919"/>
    <lineage>
        <taxon>Bacteria</taxon>
        <taxon>Bacillati</taxon>
        <taxon>Cyanobacteriota</taxon>
        <taxon>Cyanophyceae</taxon>
        <taxon>Synechococcales</taxon>
        <taxon>Prochlorococcaceae</taxon>
        <taxon>Prochlorococcus</taxon>
    </lineage>
</organism>
<evidence type="ECO:0000255" key="1">
    <source>
        <dbReference type="HAMAP-Rule" id="MF_00131"/>
    </source>
</evidence>
<sequence>MKENKKTQFPINKTLSKINKKFLELKKSDKLALMPFIMAGDPNIETTSEILLKLQEKGADLIELGIPYSDPLADGPIIQLSASRALKSGTTLKNVIQLLESLKDKLHIPIILFTYFNPVLNFGLENFCELASKVGVSGLIIPDLPLEEAYKFSEIISSYSIDLILLVAPTTPSERMKIISNNTKGFTYLVSVTGVTGERNKMENRVENLITKLQEISINPVAVGFGISSPEHVNKVRKWGADGVIIGSAFVKRISNSNEKEVVNQIGKFCEEMRKAADQ</sequence>
<dbReference type="EC" id="4.2.1.20" evidence="1"/>
<dbReference type="EMBL" id="BX548174">
    <property type="protein sequence ID" value="CAE19031.1"/>
    <property type="molecule type" value="Genomic_DNA"/>
</dbReference>
<dbReference type="RefSeq" id="WP_011132206.1">
    <property type="nucleotide sequence ID" value="NC_005072.1"/>
</dbReference>
<dbReference type="SMR" id="Q7TUC8"/>
<dbReference type="STRING" id="59919.PMM0572"/>
<dbReference type="KEGG" id="pmm:PMM0572"/>
<dbReference type="eggNOG" id="COG0159">
    <property type="taxonomic scope" value="Bacteria"/>
</dbReference>
<dbReference type="HOGENOM" id="CLU_016734_0_2_3"/>
<dbReference type="OrthoDB" id="9804578at2"/>
<dbReference type="UniPathway" id="UPA00035">
    <property type="reaction ID" value="UER00044"/>
</dbReference>
<dbReference type="Proteomes" id="UP000001026">
    <property type="component" value="Chromosome"/>
</dbReference>
<dbReference type="GO" id="GO:0005829">
    <property type="term" value="C:cytosol"/>
    <property type="evidence" value="ECO:0007669"/>
    <property type="project" value="TreeGrafter"/>
</dbReference>
<dbReference type="GO" id="GO:0004834">
    <property type="term" value="F:tryptophan synthase activity"/>
    <property type="evidence" value="ECO:0007669"/>
    <property type="project" value="UniProtKB-UniRule"/>
</dbReference>
<dbReference type="CDD" id="cd04724">
    <property type="entry name" value="Tryptophan_synthase_alpha"/>
    <property type="match status" value="1"/>
</dbReference>
<dbReference type="FunFam" id="3.20.20.70:FF:000037">
    <property type="entry name" value="Tryptophan synthase alpha chain"/>
    <property type="match status" value="1"/>
</dbReference>
<dbReference type="Gene3D" id="3.20.20.70">
    <property type="entry name" value="Aldolase class I"/>
    <property type="match status" value="1"/>
</dbReference>
<dbReference type="HAMAP" id="MF_00131">
    <property type="entry name" value="Trp_synth_alpha"/>
    <property type="match status" value="1"/>
</dbReference>
<dbReference type="InterPro" id="IPR013785">
    <property type="entry name" value="Aldolase_TIM"/>
</dbReference>
<dbReference type="InterPro" id="IPR011060">
    <property type="entry name" value="RibuloseP-bd_barrel"/>
</dbReference>
<dbReference type="InterPro" id="IPR018204">
    <property type="entry name" value="Trp_synthase_alpha_AS"/>
</dbReference>
<dbReference type="InterPro" id="IPR002028">
    <property type="entry name" value="Trp_synthase_suA"/>
</dbReference>
<dbReference type="NCBIfam" id="TIGR00262">
    <property type="entry name" value="trpA"/>
    <property type="match status" value="1"/>
</dbReference>
<dbReference type="PANTHER" id="PTHR43406:SF1">
    <property type="entry name" value="TRYPTOPHAN SYNTHASE ALPHA CHAIN, CHLOROPLASTIC"/>
    <property type="match status" value="1"/>
</dbReference>
<dbReference type="PANTHER" id="PTHR43406">
    <property type="entry name" value="TRYPTOPHAN SYNTHASE, ALPHA CHAIN"/>
    <property type="match status" value="1"/>
</dbReference>
<dbReference type="Pfam" id="PF00290">
    <property type="entry name" value="Trp_syntA"/>
    <property type="match status" value="1"/>
</dbReference>
<dbReference type="SUPFAM" id="SSF51366">
    <property type="entry name" value="Ribulose-phoshate binding barrel"/>
    <property type="match status" value="1"/>
</dbReference>
<dbReference type="PROSITE" id="PS00167">
    <property type="entry name" value="TRP_SYNTHASE_ALPHA"/>
    <property type="match status" value="1"/>
</dbReference>
<gene>
    <name evidence="1" type="primary">trpA</name>
    <name type="ordered locus">PMM0572</name>
</gene>
<protein>
    <recommendedName>
        <fullName evidence="1">Tryptophan synthase alpha chain</fullName>
        <ecNumber evidence="1">4.2.1.20</ecNumber>
    </recommendedName>
</protein>
<keyword id="KW-0028">Amino-acid biosynthesis</keyword>
<keyword id="KW-0057">Aromatic amino acid biosynthesis</keyword>
<keyword id="KW-0456">Lyase</keyword>
<keyword id="KW-0822">Tryptophan biosynthesis</keyword>
<proteinExistence type="inferred from homology"/>